<evidence type="ECO:0000255" key="1">
    <source>
        <dbReference type="HAMAP-Rule" id="MF_01863"/>
    </source>
</evidence>
<sequence length="74" mass="8327">MANEFRVCDDCQATNIKTLLPRLKEVDPDAKVEVGCQSYCGPGRKKSFAFVNNRPLSAPTEDELIDKVKKKIKK</sequence>
<gene>
    <name type="primary">ywzC</name>
    <name type="ordered locus">BSU37610</name>
</gene>
<feature type="chain" id="PRO_0000372738" description="UPF0741 protein YwzC">
    <location>
        <begin position="1"/>
        <end position="74"/>
    </location>
</feature>
<dbReference type="EMBL" id="AL009126">
    <property type="protein sequence ID" value="CAB15788.1"/>
    <property type="molecule type" value="Genomic_DNA"/>
</dbReference>
<dbReference type="PIR" id="H70070">
    <property type="entry name" value="H70070"/>
</dbReference>
<dbReference type="RefSeq" id="NP_391641.1">
    <property type="nucleotide sequence ID" value="NC_000964.3"/>
</dbReference>
<dbReference type="RefSeq" id="WP_003222050.1">
    <property type="nucleotide sequence ID" value="NZ_OZ025638.1"/>
</dbReference>
<dbReference type="SMR" id="O32280"/>
<dbReference type="FunCoup" id="O32280">
    <property type="interactions" value="80"/>
</dbReference>
<dbReference type="STRING" id="224308.BSU37610"/>
<dbReference type="PaxDb" id="224308-BSU37610"/>
<dbReference type="EnsemblBacteria" id="CAB15788">
    <property type="protein sequence ID" value="CAB15788"/>
    <property type="gene ID" value="BSU_37610"/>
</dbReference>
<dbReference type="GeneID" id="937093"/>
<dbReference type="KEGG" id="bsu:BSU37610"/>
<dbReference type="PATRIC" id="fig|224308.179.peg.4073"/>
<dbReference type="eggNOG" id="COG4844">
    <property type="taxonomic scope" value="Bacteria"/>
</dbReference>
<dbReference type="InParanoid" id="O32280"/>
<dbReference type="OrthoDB" id="1645211at2"/>
<dbReference type="BioCyc" id="BSUB:BSU37610-MONOMER"/>
<dbReference type="PRO" id="PR:O32280"/>
<dbReference type="Proteomes" id="UP000001570">
    <property type="component" value="Chromosome"/>
</dbReference>
<dbReference type="HAMAP" id="MF_01863">
    <property type="entry name" value="UPF0741"/>
    <property type="match status" value="1"/>
</dbReference>
<dbReference type="InterPro" id="IPR009910">
    <property type="entry name" value="DUF1450"/>
</dbReference>
<dbReference type="InterPro" id="IPR020880">
    <property type="entry name" value="UPF0741"/>
</dbReference>
<dbReference type="Pfam" id="PF07293">
    <property type="entry name" value="DUF1450"/>
    <property type="match status" value="1"/>
</dbReference>
<protein>
    <recommendedName>
        <fullName evidence="1">UPF0741 protein YwzC</fullName>
    </recommendedName>
</protein>
<reference key="1">
    <citation type="journal article" date="1997" name="Nature">
        <title>The complete genome sequence of the Gram-positive bacterium Bacillus subtilis.</title>
        <authorList>
            <person name="Kunst F."/>
            <person name="Ogasawara N."/>
            <person name="Moszer I."/>
            <person name="Albertini A.M."/>
            <person name="Alloni G."/>
            <person name="Azevedo V."/>
            <person name="Bertero M.G."/>
            <person name="Bessieres P."/>
            <person name="Bolotin A."/>
            <person name="Borchert S."/>
            <person name="Borriss R."/>
            <person name="Boursier L."/>
            <person name="Brans A."/>
            <person name="Braun M."/>
            <person name="Brignell S.C."/>
            <person name="Bron S."/>
            <person name="Brouillet S."/>
            <person name="Bruschi C.V."/>
            <person name="Caldwell B."/>
            <person name="Capuano V."/>
            <person name="Carter N.M."/>
            <person name="Choi S.-K."/>
            <person name="Codani J.-J."/>
            <person name="Connerton I.F."/>
            <person name="Cummings N.J."/>
            <person name="Daniel R.A."/>
            <person name="Denizot F."/>
            <person name="Devine K.M."/>
            <person name="Duesterhoeft A."/>
            <person name="Ehrlich S.D."/>
            <person name="Emmerson P.T."/>
            <person name="Entian K.-D."/>
            <person name="Errington J."/>
            <person name="Fabret C."/>
            <person name="Ferrari E."/>
            <person name="Foulger D."/>
            <person name="Fritz C."/>
            <person name="Fujita M."/>
            <person name="Fujita Y."/>
            <person name="Fuma S."/>
            <person name="Galizzi A."/>
            <person name="Galleron N."/>
            <person name="Ghim S.-Y."/>
            <person name="Glaser P."/>
            <person name="Goffeau A."/>
            <person name="Golightly E.J."/>
            <person name="Grandi G."/>
            <person name="Guiseppi G."/>
            <person name="Guy B.J."/>
            <person name="Haga K."/>
            <person name="Haiech J."/>
            <person name="Harwood C.R."/>
            <person name="Henaut A."/>
            <person name="Hilbert H."/>
            <person name="Holsappel S."/>
            <person name="Hosono S."/>
            <person name="Hullo M.-F."/>
            <person name="Itaya M."/>
            <person name="Jones L.-M."/>
            <person name="Joris B."/>
            <person name="Karamata D."/>
            <person name="Kasahara Y."/>
            <person name="Klaerr-Blanchard M."/>
            <person name="Klein C."/>
            <person name="Kobayashi Y."/>
            <person name="Koetter P."/>
            <person name="Koningstein G."/>
            <person name="Krogh S."/>
            <person name="Kumano M."/>
            <person name="Kurita K."/>
            <person name="Lapidus A."/>
            <person name="Lardinois S."/>
            <person name="Lauber J."/>
            <person name="Lazarevic V."/>
            <person name="Lee S.-M."/>
            <person name="Levine A."/>
            <person name="Liu H."/>
            <person name="Masuda S."/>
            <person name="Mauel C."/>
            <person name="Medigue C."/>
            <person name="Medina N."/>
            <person name="Mellado R.P."/>
            <person name="Mizuno M."/>
            <person name="Moestl D."/>
            <person name="Nakai S."/>
            <person name="Noback M."/>
            <person name="Noone D."/>
            <person name="O'Reilly M."/>
            <person name="Ogawa K."/>
            <person name="Ogiwara A."/>
            <person name="Oudega B."/>
            <person name="Park S.-H."/>
            <person name="Parro V."/>
            <person name="Pohl T.M."/>
            <person name="Portetelle D."/>
            <person name="Porwollik S."/>
            <person name="Prescott A.M."/>
            <person name="Presecan E."/>
            <person name="Pujic P."/>
            <person name="Purnelle B."/>
            <person name="Rapoport G."/>
            <person name="Rey M."/>
            <person name="Reynolds S."/>
            <person name="Rieger M."/>
            <person name="Rivolta C."/>
            <person name="Rocha E."/>
            <person name="Roche B."/>
            <person name="Rose M."/>
            <person name="Sadaie Y."/>
            <person name="Sato T."/>
            <person name="Scanlan E."/>
            <person name="Schleich S."/>
            <person name="Schroeter R."/>
            <person name="Scoffone F."/>
            <person name="Sekiguchi J."/>
            <person name="Sekowska A."/>
            <person name="Seror S.J."/>
            <person name="Serror P."/>
            <person name="Shin B.-S."/>
            <person name="Soldo B."/>
            <person name="Sorokin A."/>
            <person name="Tacconi E."/>
            <person name="Takagi T."/>
            <person name="Takahashi H."/>
            <person name="Takemaru K."/>
            <person name="Takeuchi M."/>
            <person name="Tamakoshi A."/>
            <person name="Tanaka T."/>
            <person name="Terpstra P."/>
            <person name="Tognoni A."/>
            <person name="Tosato V."/>
            <person name="Uchiyama S."/>
            <person name="Vandenbol M."/>
            <person name="Vannier F."/>
            <person name="Vassarotti A."/>
            <person name="Viari A."/>
            <person name="Wambutt R."/>
            <person name="Wedler E."/>
            <person name="Wedler H."/>
            <person name="Weitzenegger T."/>
            <person name="Winters P."/>
            <person name="Wipat A."/>
            <person name="Yamamoto H."/>
            <person name="Yamane K."/>
            <person name="Yasumoto K."/>
            <person name="Yata K."/>
            <person name="Yoshida K."/>
            <person name="Yoshikawa H.-F."/>
            <person name="Zumstein E."/>
            <person name="Yoshikawa H."/>
            <person name="Danchin A."/>
        </authorList>
    </citation>
    <scope>NUCLEOTIDE SEQUENCE [LARGE SCALE GENOMIC DNA]</scope>
    <source>
        <strain>168</strain>
    </source>
</reference>
<keyword id="KW-1185">Reference proteome</keyword>
<name>YWZC_BACSU</name>
<organism>
    <name type="scientific">Bacillus subtilis (strain 168)</name>
    <dbReference type="NCBI Taxonomy" id="224308"/>
    <lineage>
        <taxon>Bacteria</taxon>
        <taxon>Bacillati</taxon>
        <taxon>Bacillota</taxon>
        <taxon>Bacilli</taxon>
        <taxon>Bacillales</taxon>
        <taxon>Bacillaceae</taxon>
        <taxon>Bacillus</taxon>
    </lineage>
</organism>
<proteinExistence type="inferred from homology"/>
<accession>O32280</accession>
<comment type="similarity">
    <text evidence="1">Belongs to the UPF0741 family.</text>
</comment>